<dbReference type="EC" id="3.1.1.96" evidence="1"/>
<dbReference type="EMBL" id="AM260479">
    <property type="protein sequence ID" value="CAJ91641.1"/>
    <property type="molecule type" value="Genomic_DNA"/>
</dbReference>
<dbReference type="RefSeq" id="WP_010813898.1">
    <property type="nucleotide sequence ID" value="NZ_CP039287.1"/>
</dbReference>
<dbReference type="SMR" id="Q0KED0"/>
<dbReference type="STRING" id="381666.H16_A0491"/>
<dbReference type="GeneID" id="34308465"/>
<dbReference type="KEGG" id="reh:H16_A0491"/>
<dbReference type="eggNOG" id="COG1490">
    <property type="taxonomic scope" value="Bacteria"/>
</dbReference>
<dbReference type="HOGENOM" id="CLU_076901_1_1_4"/>
<dbReference type="OrthoDB" id="9801395at2"/>
<dbReference type="Proteomes" id="UP000008210">
    <property type="component" value="Chromosome 1"/>
</dbReference>
<dbReference type="GO" id="GO:0005737">
    <property type="term" value="C:cytoplasm"/>
    <property type="evidence" value="ECO:0007669"/>
    <property type="project" value="UniProtKB-SubCell"/>
</dbReference>
<dbReference type="GO" id="GO:0051500">
    <property type="term" value="F:D-tyrosyl-tRNA(Tyr) deacylase activity"/>
    <property type="evidence" value="ECO:0007669"/>
    <property type="project" value="TreeGrafter"/>
</dbReference>
<dbReference type="GO" id="GO:0106026">
    <property type="term" value="F:Gly-tRNA(Ala) deacylase activity"/>
    <property type="evidence" value="ECO:0007669"/>
    <property type="project" value="UniProtKB-UniRule"/>
</dbReference>
<dbReference type="GO" id="GO:0043908">
    <property type="term" value="F:Ser(Gly)-tRNA(Ala) hydrolase activity"/>
    <property type="evidence" value="ECO:0007669"/>
    <property type="project" value="UniProtKB-UniRule"/>
</dbReference>
<dbReference type="GO" id="GO:0000049">
    <property type="term" value="F:tRNA binding"/>
    <property type="evidence" value="ECO:0007669"/>
    <property type="project" value="UniProtKB-UniRule"/>
</dbReference>
<dbReference type="GO" id="GO:0019478">
    <property type="term" value="P:D-amino acid catabolic process"/>
    <property type="evidence" value="ECO:0007669"/>
    <property type="project" value="UniProtKB-UniRule"/>
</dbReference>
<dbReference type="CDD" id="cd00563">
    <property type="entry name" value="Dtyr_deacylase"/>
    <property type="match status" value="1"/>
</dbReference>
<dbReference type="FunFam" id="3.50.80.10:FF:000001">
    <property type="entry name" value="D-aminoacyl-tRNA deacylase"/>
    <property type="match status" value="1"/>
</dbReference>
<dbReference type="Gene3D" id="3.50.80.10">
    <property type="entry name" value="D-tyrosyl-tRNA(Tyr) deacylase"/>
    <property type="match status" value="1"/>
</dbReference>
<dbReference type="HAMAP" id="MF_00518">
    <property type="entry name" value="Deacylase_Dtd"/>
    <property type="match status" value="1"/>
</dbReference>
<dbReference type="InterPro" id="IPR003732">
    <property type="entry name" value="Daa-tRNA_deacyls_DTD"/>
</dbReference>
<dbReference type="InterPro" id="IPR023509">
    <property type="entry name" value="DTD-like_sf"/>
</dbReference>
<dbReference type="NCBIfam" id="TIGR00256">
    <property type="entry name" value="D-aminoacyl-tRNA deacylase"/>
    <property type="match status" value="1"/>
</dbReference>
<dbReference type="PANTHER" id="PTHR10472:SF5">
    <property type="entry name" value="D-AMINOACYL-TRNA DEACYLASE 1"/>
    <property type="match status" value="1"/>
</dbReference>
<dbReference type="PANTHER" id="PTHR10472">
    <property type="entry name" value="D-TYROSYL-TRNA TYR DEACYLASE"/>
    <property type="match status" value="1"/>
</dbReference>
<dbReference type="Pfam" id="PF02580">
    <property type="entry name" value="Tyr_Deacylase"/>
    <property type="match status" value="1"/>
</dbReference>
<dbReference type="SUPFAM" id="SSF69500">
    <property type="entry name" value="DTD-like"/>
    <property type="match status" value="1"/>
</dbReference>
<reference key="1">
    <citation type="journal article" date="2006" name="Nat. Biotechnol.">
        <title>Genome sequence of the bioplastic-producing 'Knallgas' bacterium Ralstonia eutropha H16.</title>
        <authorList>
            <person name="Pohlmann A."/>
            <person name="Fricke W.F."/>
            <person name="Reinecke F."/>
            <person name="Kusian B."/>
            <person name="Liesegang H."/>
            <person name="Cramm R."/>
            <person name="Eitinger T."/>
            <person name="Ewering C."/>
            <person name="Poetter M."/>
            <person name="Schwartz E."/>
            <person name="Strittmatter A."/>
            <person name="Voss I."/>
            <person name="Gottschalk G."/>
            <person name="Steinbuechel A."/>
            <person name="Friedrich B."/>
            <person name="Bowien B."/>
        </authorList>
    </citation>
    <scope>NUCLEOTIDE SEQUENCE [LARGE SCALE GENOMIC DNA]</scope>
    <source>
        <strain>ATCC 17699 / DSM 428 / KCTC 22496 / NCIMB 10442 / H16 / Stanier 337</strain>
    </source>
</reference>
<accession>Q0KED0</accession>
<keyword id="KW-0963">Cytoplasm</keyword>
<keyword id="KW-0378">Hydrolase</keyword>
<keyword id="KW-1185">Reference proteome</keyword>
<keyword id="KW-0694">RNA-binding</keyword>
<keyword id="KW-0820">tRNA-binding</keyword>
<name>DTD_CUPNH</name>
<proteinExistence type="inferred from homology"/>
<comment type="function">
    <text evidence="1">An aminoacyl-tRNA editing enzyme that deacylates mischarged D-aminoacyl-tRNAs. Also deacylates mischarged glycyl-tRNA(Ala), protecting cells against glycine mischarging by AlaRS. Acts via tRNA-based rather than protein-based catalysis; rejects L-amino acids rather than detecting D-amino acids in the active site. By recycling D-aminoacyl-tRNA to D-amino acids and free tRNA molecules, this enzyme counteracts the toxicity associated with the formation of D-aminoacyl-tRNA entities in vivo and helps enforce protein L-homochirality.</text>
</comment>
<comment type="catalytic activity">
    <reaction evidence="1">
        <text>glycyl-tRNA(Ala) + H2O = tRNA(Ala) + glycine + H(+)</text>
        <dbReference type="Rhea" id="RHEA:53744"/>
        <dbReference type="Rhea" id="RHEA-COMP:9657"/>
        <dbReference type="Rhea" id="RHEA-COMP:13640"/>
        <dbReference type="ChEBI" id="CHEBI:15377"/>
        <dbReference type="ChEBI" id="CHEBI:15378"/>
        <dbReference type="ChEBI" id="CHEBI:57305"/>
        <dbReference type="ChEBI" id="CHEBI:78442"/>
        <dbReference type="ChEBI" id="CHEBI:78522"/>
        <dbReference type="EC" id="3.1.1.96"/>
    </reaction>
</comment>
<comment type="catalytic activity">
    <reaction evidence="1">
        <text>a D-aminoacyl-tRNA + H2O = a tRNA + a D-alpha-amino acid + H(+)</text>
        <dbReference type="Rhea" id="RHEA:13953"/>
        <dbReference type="Rhea" id="RHEA-COMP:10123"/>
        <dbReference type="Rhea" id="RHEA-COMP:10124"/>
        <dbReference type="ChEBI" id="CHEBI:15377"/>
        <dbReference type="ChEBI" id="CHEBI:15378"/>
        <dbReference type="ChEBI" id="CHEBI:59871"/>
        <dbReference type="ChEBI" id="CHEBI:78442"/>
        <dbReference type="ChEBI" id="CHEBI:79333"/>
        <dbReference type="EC" id="3.1.1.96"/>
    </reaction>
</comment>
<comment type="subunit">
    <text evidence="1">Homodimer.</text>
</comment>
<comment type="subcellular location">
    <subcellularLocation>
        <location evidence="1">Cytoplasm</location>
    </subcellularLocation>
</comment>
<comment type="domain">
    <text evidence="1">A Gly-cisPro motif from one monomer fits into the active site of the other monomer to allow specific chiral rejection of L-amino acids.</text>
</comment>
<comment type="similarity">
    <text evidence="1">Belongs to the DTD family.</text>
</comment>
<organism>
    <name type="scientific">Cupriavidus necator (strain ATCC 17699 / DSM 428 / KCTC 22496 / NCIMB 10442 / H16 / Stanier 337)</name>
    <name type="common">Ralstonia eutropha</name>
    <dbReference type="NCBI Taxonomy" id="381666"/>
    <lineage>
        <taxon>Bacteria</taxon>
        <taxon>Pseudomonadati</taxon>
        <taxon>Pseudomonadota</taxon>
        <taxon>Betaproteobacteria</taxon>
        <taxon>Burkholderiales</taxon>
        <taxon>Burkholderiaceae</taxon>
        <taxon>Cupriavidus</taxon>
    </lineage>
</organism>
<evidence type="ECO:0000255" key="1">
    <source>
        <dbReference type="HAMAP-Rule" id="MF_00518"/>
    </source>
</evidence>
<feature type="chain" id="PRO_1000050876" description="D-aminoacyl-tRNA deacylase">
    <location>
        <begin position="1"/>
        <end position="153"/>
    </location>
</feature>
<feature type="short sequence motif" description="Gly-cisPro motif, important for rejection of L-amino acids" evidence="1">
    <location>
        <begin position="142"/>
        <end position="143"/>
    </location>
</feature>
<protein>
    <recommendedName>
        <fullName evidence="1">D-aminoacyl-tRNA deacylase</fullName>
        <shortName evidence="1">DTD</shortName>
        <ecNumber evidence="1">3.1.1.96</ecNumber>
    </recommendedName>
    <alternativeName>
        <fullName evidence="1">Gly-tRNA(Ala) deacylase</fullName>
    </alternativeName>
</protein>
<sequence length="153" mass="16242">MIALIQRVAQARVTVEGRTTGEIGAGLLALVCAERGDTEAQAERLLAKMLSYRVFSDAAGKMNLPVQNMDGNGNAGGLLVVSQFTLAADTNSGTRPSFTPAASPEDGRRLYEHFVAQARAAHPQVQTGEFGAMMQVSLVNDGPVTFWLRVPPA</sequence>
<gene>
    <name evidence="1" type="primary">dtd</name>
    <name type="ordered locus">H16_A0491</name>
</gene>